<comment type="function">
    <text evidence="1">Catalyzes the oxidation of 3-carboxy-2-hydroxy-4-methylpentanoate (3-isopropylmalate) to 3-carboxy-4-methyl-2-oxopentanoate. The product decarboxylates to 4-methyl-2 oxopentanoate.</text>
</comment>
<comment type="catalytic activity">
    <reaction evidence="1">
        <text>(2R,3S)-3-isopropylmalate + NAD(+) = 4-methyl-2-oxopentanoate + CO2 + NADH</text>
        <dbReference type="Rhea" id="RHEA:32271"/>
        <dbReference type="ChEBI" id="CHEBI:16526"/>
        <dbReference type="ChEBI" id="CHEBI:17865"/>
        <dbReference type="ChEBI" id="CHEBI:35121"/>
        <dbReference type="ChEBI" id="CHEBI:57540"/>
        <dbReference type="ChEBI" id="CHEBI:57945"/>
        <dbReference type="EC" id="1.1.1.85"/>
    </reaction>
</comment>
<comment type="cofactor">
    <cofactor evidence="1">
        <name>Mg(2+)</name>
        <dbReference type="ChEBI" id="CHEBI:18420"/>
    </cofactor>
    <cofactor evidence="1">
        <name>Mn(2+)</name>
        <dbReference type="ChEBI" id="CHEBI:29035"/>
    </cofactor>
    <text evidence="1">Binds 1 Mg(2+) or Mn(2+) ion per subunit.</text>
</comment>
<comment type="pathway">
    <text evidence="1">Amino-acid biosynthesis; L-leucine biosynthesis; L-leucine from 3-methyl-2-oxobutanoate: step 3/4.</text>
</comment>
<comment type="subunit">
    <text evidence="1">Homodimer.</text>
</comment>
<comment type="subcellular location">
    <subcellularLocation>
        <location evidence="1">Cytoplasm</location>
    </subcellularLocation>
</comment>
<comment type="similarity">
    <text evidence="1">Belongs to the isocitrate and isopropylmalate dehydrogenases family. LeuB type 1 subfamily.</text>
</comment>
<reference key="1">
    <citation type="journal article" date="2005" name="Nucleic Acids Res.">
        <title>Genomic blueprint of Hahella chejuensis, a marine microbe producing an algicidal agent.</title>
        <authorList>
            <person name="Jeong H."/>
            <person name="Yim J.H."/>
            <person name="Lee C."/>
            <person name="Choi S.-H."/>
            <person name="Park Y.K."/>
            <person name="Yoon S.H."/>
            <person name="Hur C.-G."/>
            <person name="Kang H.-Y."/>
            <person name="Kim D."/>
            <person name="Lee H.H."/>
            <person name="Park K.H."/>
            <person name="Park S.-H."/>
            <person name="Park H.-S."/>
            <person name="Lee H.K."/>
            <person name="Oh T.K."/>
            <person name="Kim J.F."/>
        </authorList>
    </citation>
    <scope>NUCLEOTIDE SEQUENCE [LARGE SCALE GENOMIC DNA]</scope>
    <source>
        <strain>KCTC 2396</strain>
    </source>
</reference>
<protein>
    <recommendedName>
        <fullName evidence="1">3-isopropylmalate dehydrogenase</fullName>
        <ecNumber evidence="1">1.1.1.85</ecNumber>
    </recommendedName>
    <alternativeName>
        <fullName evidence="1">3-IPM-DH</fullName>
    </alternativeName>
    <alternativeName>
        <fullName evidence="1">Beta-IPM dehydrogenase</fullName>
        <shortName evidence="1">IMDH</shortName>
    </alternativeName>
</protein>
<keyword id="KW-0028">Amino-acid biosynthesis</keyword>
<keyword id="KW-0100">Branched-chain amino acid biosynthesis</keyword>
<keyword id="KW-0963">Cytoplasm</keyword>
<keyword id="KW-0432">Leucine biosynthesis</keyword>
<keyword id="KW-0460">Magnesium</keyword>
<keyword id="KW-0464">Manganese</keyword>
<keyword id="KW-0479">Metal-binding</keyword>
<keyword id="KW-0520">NAD</keyword>
<keyword id="KW-0560">Oxidoreductase</keyword>
<keyword id="KW-1185">Reference proteome</keyword>
<name>LEU3_HAHCH</name>
<feature type="chain" id="PRO_0000250118" description="3-isopropylmalate dehydrogenase">
    <location>
        <begin position="1"/>
        <end position="360"/>
    </location>
</feature>
<feature type="binding site" evidence="1">
    <location>
        <begin position="76"/>
        <end position="89"/>
    </location>
    <ligand>
        <name>NAD(+)</name>
        <dbReference type="ChEBI" id="CHEBI:57540"/>
    </ligand>
</feature>
<feature type="binding site" evidence="1">
    <location>
        <position position="96"/>
    </location>
    <ligand>
        <name>substrate</name>
    </ligand>
</feature>
<feature type="binding site" evidence="1">
    <location>
        <position position="106"/>
    </location>
    <ligand>
        <name>substrate</name>
    </ligand>
</feature>
<feature type="binding site" evidence="1">
    <location>
        <position position="134"/>
    </location>
    <ligand>
        <name>substrate</name>
    </ligand>
</feature>
<feature type="binding site" evidence="1">
    <location>
        <position position="224"/>
    </location>
    <ligand>
        <name>Mg(2+)</name>
        <dbReference type="ChEBI" id="CHEBI:18420"/>
    </ligand>
</feature>
<feature type="binding site" evidence="1">
    <location>
        <position position="224"/>
    </location>
    <ligand>
        <name>substrate</name>
    </ligand>
</feature>
<feature type="binding site" evidence="1">
    <location>
        <position position="248"/>
    </location>
    <ligand>
        <name>Mg(2+)</name>
        <dbReference type="ChEBI" id="CHEBI:18420"/>
    </ligand>
</feature>
<feature type="binding site" evidence="1">
    <location>
        <position position="252"/>
    </location>
    <ligand>
        <name>Mg(2+)</name>
        <dbReference type="ChEBI" id="CHEBI:18420"/>
    </ligand>
</feature>
<feature type="binding site" evidence="1">
    <location>
        <begin position="282"/>
        <end position="294"/>
    </location>
    <ligand>
        <name>NAD(+)</name>
        <dbReference type="ChEBI" id="CHEBI:57540"/>
    </ligand>
</feature>
<feature type="site" description="Important for catalysis" evidence="1">
    <location>
        <position position="141"/>
    </location>
</feature>
<feature type="site" description="Important for catalysis" evidence="1">
    <location>
        <position position="192"/>
    </location>
</feature>
<accession>Q2SJD6</accession>
<sequence length="360" mass="38292">MAKQVLILPGDGIGPEIVAQARNVLDVVNNKFSLGLTFTEGLVGGAAIDTTGVPFPEETLATAEAADAILLGAVGGPKWDKLDMAIRPEKGLLGLRSGLELFANLRPAILYPQLAEASSLRPEVVAGLDILIVRELTGGIYFGKPRGVRTLENGEREGFNTYVYSESEIRRIGRVAFEAAQKRNKRLCSVDKANVLEVTVLWREVMDELAKEYPDVELSHMYVDNAAMQLVRAPKQFDVIVTGNMFGDILSDEAAMLTGSIGMLPSASLNAAGKGMYEPCHGSAPDIAGQNMANPLATILSAAMMLRYSLAAEDAAAAIEQAVSDVLDQGLRTRDIAGSSGESVSTQAMGEAVARVLADR</sequence>
<proteinExistence type="inferred from homology"/>
<organism>
    <name type="scientific">Hahella chejuensis (strain KCTC 2396)</name>
    <dbReference type="NCBI Taxonomy" id="349521"/>
    <lineage>
        <taxon>Bacteria</taxon>
        <taxon>Pseudomonadati</taxon>
        <taxon>Pseudomonadota</taxon>
        <taxon>Gammaproteobacteria</taxon>
        <taxon>Oceanospirillales</taxon>
        <taxon>Hahellaceae</taxon>
        <taxon>Hahella</taxon>
    </lineage>
</organism>
<evidence type="ECO:0000255" key="1">
    <source>
        <dbReference type="HAMAP-Rule" id="MF_01033"/>
    </source>
</evidence>
<dbReference type="EC" id="1.1.1.85" evidence="1"/>
<dbReference type="EMBL" id="CP000155">
    <property type="protein sequence ID" value="ABC29238.1"/>
    <property type="molecule type" value="Genomic_DNA"/>
</dbReference>
<dbReference type="RefSeq" id="WP_011396307.1">
    <property type="nucleotide sequence ID" value="NC_007645.1"/>
</dbReference>
<dbReference type="SMR" id="Q2SJD6"/>
<dbReference type="STRING" id="349521.HCH_02430"/>
<dbReference type="KEGG" id="hch:HCH_02430"/>
<dbReference type="eggNOG" id="COG0473">
    <property type="taxonomic scope" value="Bacteria"/>
</dbReference>
<dbReference type="HOGENOM" id="CLU_031953_0_3_6"/>
<dbReference type="OrthoDB" id="9806254at2"/>
<dbReference type="UniPathway" id="UPA00048">
    <property type="reaction ID" value="UER00072"/>
</dbReference>
<dbReference type="Proteomes" id="UP000000238">
    <property type="component" value="Chromosome"/>
</dbReference>
<dbReference type="GO" id="GO:0005829">
    <property type="term" value="C:cytosol"/>
    <property type="evidence" value="ECO:0007669"/>
    <property type="project" value="TreeGrafter"/>
</dbReference>
<dbReference type="GO" id="GO:0003862">
    <property type="term" value="F:3-isopropylmalate dehydrogenase activity"/>
    <property type="evidence" value="ECO:0007669"/>
    <property type="project" value="UniProtKB-UniRule"/>
</dbReference>
<dbReference type="GO" id="GO:0000287">
    <property type="term" value="F:magnesium ion binding"/>
    <property type="evidence" value="ECO:0007669"/>
    <property type="project" value="InterPro"/>
</dbReference>
<dbReference type="GO" id="GO:0051287">
    <property type="term" value="F:NAD binding"/>
    <property type="evidence" value="ECO:0007669"/>
    <property type="project" value="InterPro"/>
</dbReference>
<dbReference type="GO" id="GO:0009098">
    <property type="term" value="P:L-leucine biosynthetic process"/>
    <property type="evidence" value="ECO:0007669"/>
    <property type="project" value="UniProtKB-UniRule"/>
</dbReference>
<dbReference type="FunFam" id="3.40.718.10:FF:000004">
    <property type="entry name" value="3-isopropylmalate dehydrogenase"/>
    <property type="match status" value="1"/>
</dbReference>
<dbReference type="Gene3D" id="3.40.718.10">
    <property type="entry name" value="Isopropylmalate Dehydrogenase"/>
    <property type="match status" value="1"/>
</dbReference>
<dbReference type="HAMAP" id="MF_01033">
    <property type="entry name" value="LeuB_type1"/>
    <property type="match status" value="1"/>
</dbReference>
<dbReference type="InterPro" id="IPR019818">
    <property type="entry name" value="IsoCit/isopropylmalate_DH_CS"/>
</dbReference>
<dbReference type="InterPro" id="IPR024084">
    <property type="entry name" value="IsoPropMal-DH-like_dom"/>
</dbReference>
<dbReference type="InterPro" id="IPR004429">
    <property type="entry name" value="Isopropylmalate_DH"/>
</dbReference>
<dbReference type="NCBIfam" id="TIGR00169">
    <property type="entry name" value="leuB"/>
    <property type="match status" value="1"/>
</dbReference>
<dbReference type="PANTHER" id="PTHR42979">
    <property type="entry name" value="3-ISOPROPYLMALATE DEHYDROGENASE"/>
    <property type="match status" value="1"/>
</dbReference>
<dbReference type="PANTHER" id="PTHR42979:SF1">
    <property type="entry name" value="3-ISOPROPYLMALATE DEHYDROGENASE"/>
    <property type="match status" value="1"/>
</dbReference>
<dbReference type="Pfam" id="PF00180">
    <property type="entry name" value="Iso_dh"/>
    <property type="match status" value="1"/>
</dbReference>
<dbReference type="SMART" id="SM01329">
    <property type="entry name" value="Iso_dh"/>
    <property type="match status" value="1"/>
</dbReference>
<dbReference type="SUPFAM" id="SSF53659">
    <property type="entry name" value="Isocitrate/Isopropylmalate dehydrogenase-like"/>
    <property type="match status" value="1"/>
</dbReference>
<dbReference type="PROSITE" id="PS00470">
    <property type="entry name" value="IDH_IMDH"/>
    <property type="match status" value="1"/>
</dbReference>
<gene>
    <name evidence="1" type="primary">leuB</name>
    <name type="ordered locus">HCH_02430</name>
</gene>